<dbReference type="EMBL" id="AK056925">
    <property type="protein sequence ID" value="BAB71311.1"/>
    <property type="molecule type" value="mRNA"/>
</dbReference>
<dbReference type="EMBL" id="AC025457">
    <property type="status" value="NOT_ANNOTATED_CDS"/>
    <property type="molecule type" value="Genomic_DNA"/>
</dbReference>
<dbReference type="EMBL" id="AC114956">
    <property type="status" value="NOT_ANNOTATED_CDS"/>
    <property type="molecule type" value="Genomic_DNA"/>
</dbReference>
<dbReference type="EMBL" id="KF457895">
    <property type="status" value="NOT_ANNOTATED_CDS"/>
    <property type="molecule type" value="Genomic_DNA"/>
</dbReference>
<dbReference type="EMBL" id="KF459895">
    <property type="status" value="NOT_ANNOTATED_CDS"/>
    <property type="molecule type" value="Genomic_DNA"/>
</dbReference>
<dbReference type="EMBL" id="KF459900">
    <property type="status" value="NOT_ANNOTATED_CDS"/>
    <property type="molecule type" value="Genomic_DNA"/>
</dbReference>
<dbReference type="EMBL" id="BC036867">
    <property type="protein sequence ID" value="AAH36867.1"/>
    <property type="molecule type" value="mRNA"/>
</dbReference>
<dbReference type="CCDS" id="CCDS3946.1"/>
<dbReference type="RefSeq" id="NP_940968.1">
    <property type="nucleotide sequence ID" value="NM_198566.4"/>
</dbReference>
<dbReference type="RefSeq" id="XP_054208508.1">
    <property type="nucleotide sequence ID" value="XM_054352533.1"/>
</dbReference>
<dbReference type="BioGRID" id="131979">
    <property type="interactions" value="33"/>
</dbReference>
<dbReference type="FunCoup" id="Q96MH7">
    <property type="interactions" value="1209"/>
</dbReference>
<dbReference type="IntAct" id="Q96MH7">
    <property type="interactions" value="26"/>
</dbReference>
<dbReference type="STRING" id="9606.ENSP00000303490"/>
<dbReference type="GlyGen" id="Q96MH7">
    <property type="glycosylation" value="1 site, 1 O-linked glycan (1 site)"/>
</dbReference>
<dbReference type="iPTMnet" id="Q96MH7"/>
<dbReference type="PhosphoSitePlus" id="Q96MH7"/>
<dbReference type="BioMuta" id="C5orf34"/>
<dbReference type="DMDM" id="338817858"/>
<dbReference type="jPOST" id="Q96MH7"/>
<dbReference type="MassIVE" id="Q96MH7"/>
<dbReference type="PaxDb" id="9606-ENSP00000303490"/>
<dbReference type="PeptideAtlas" id="Q96MH7"/>
<dbReference type="ProteomicsDB" id="77360"/>
<dbReference type="Pumba" id="Q96MH7"/>
<dbReference type="Antibodypedia" id="50296">
    <property type="antibodies" value="22 antibodies from 6 providers"/>
</dbReference>
<dbReference type="DNASU" id="375444"/>
<dbReference type="Ensembl" id="ENST00000306862.7">
    <property type="protein sequence ID" value="ENSP00000303490.2"/>
    <property type="gene ID" value="ENSG00000172244.9"/>
</dbReference>
<dbReference type="GeneID" id="375444"/>
<dbReference type="KEGG" id="hsa:375444"/>
<dbReference type="MANE-Select" id="ENST00000306862.7">
    <property type="protein sequence ID" value="ENSP00000303490.2"/>
    <property type="RefSeq nucleotide sequence ID" value="NM_198566.4"/>
    <property type="RefSeq protein sequence ID" value="NP_940968.1"/>
</dbReference>
<dbReference type="UCSC" id="uc003jnz.3">
    <property type="organism name" value="human"/>
</dbReference>
<dbReference type="AGR" id="HGNC:24738"/>
<dbReference type="CTD" id="375444"/>
<dbReference type="DisGeNET" id="375444"/>
<dbReference type="GeneCards" id="C5orf34"/>
<dbReference type="HGNC" id="HGNC:24738">
    <property type="gene designation" value="C5orf34"/>
</dbReference>
<dbReference type="HPA" id="ENSG00000172244">
    <property type="expression patterns" value="Low tissue specificity"/>
</dbReference>
<dbReference type="neXtProt" id="NX_Q96MH7"/>
<dbReference type="OpenTargets" id="ENSG00000172244"/>
<dbReference type="PharmGKB" id="PA162380068"/>
<dbReference type="VEuPathDB" id="HostDB:ENSG00000172244"/>
<dbReference type="eggNOG" id="ENOG502QSYT">
    <property type="taxonomic scope" value="Eukaryota"/>
</dbReference>
<dbReference type="GeneTree" id="ENSGT00500000044987"/>
<dbReference type="HOGENOM" id="CLU_029198_0_0_1"/>
<dbReference type="InParanoid" id="Q96MH7"/>
<dbReference type="OMA" id="TAVISWC"/>
<dbReference type="OrthoDB" id="75908at2759"/>
<dbReference type="PAN-GO" id="Q96MH7">
    <property type="GO annotations" value="0 GO annotations based on evolutionary models"/>
</dbReference>
<dbReference type="PhylomeDB" id="Q96MH7"/>
<dbReference type="TreeFam" id="TF328443"/>
<dbReference type="PathwayCommons" id="Q96MH7"/>
<dbReference type="SignaLink" id="Q96MH7"/>
<dbReference type="BioGRID-ORCS" id="375444">
    <property type="hits" value="16 hits in 1126 CRISPR screens"/>
</dbReference>
<dbReference type="ChiTaRS" id="C5orf34">
    <property type="organism name" value="human"/>
</dbReference>
<dbReference type="GenomeRNAi" id="375444"/>
<dbReference type="Pharos" id="Q96MH7">
    <property type="development level" value="Tdark"/>
</dbReference>
<dbReference type="PRO" id="PR:Q96MH7"/>
<dbReference type="Proteomes" id="UP000005640">
    <property type="component" value="Chromosome 5"/>
</dbReference>
<dbReference type="RNAct" id="Q96MH7">
    <property type="molecule type" value="protein"/>
</dbReference>
<dbReference type="Bgee" id="ENSG00000172244">
    <property type="expression patterns" value="Expressed in secondary oocyte and 125 other cell types or tissues"/>
</dbReference>
<dbReference type="ExpressionAtlas" id="Q96MH7">
    <property type="expression patterns" value="baseline and differential"/>
</dbReference>
<dbReference type="InterPro" id="IPR053901">
    <property type="entry name" value="C5orf34-like"/>
</dbReference>
<dbReference type="InterPro" id="IPR053899">
    <property type="entry name" value="C5orf34-like_2nd"/>
</dbReference>
<dbReference type="InterPro" id="IPR027865">
    <property type="entry name" value="C5orf34-like_C"/>
</dbReference>
<dbReference type="InterPro" id="IPR053900">
    <property type="entry name" value="C5orf34-like_dom"/>
</dbReference>
<dbReference type="InterPro" id="IPR027830">
    <property type="entry name" value="C5orf34-like_N"/>
</dbReference>
<dbReference type="PANTHER" id="PTHR34531:SF1">
    <property type="entry name" value="CHROMOSOME 5 OPEN READING FRAME 34"/>
    <property type="match status" value="1"/>
</dbReference>
<dbReference type="PANTHER" id="PTHR34531">
    <property type="entry name" value="ZGC:153352"/>
    <property type="match status" value="1"/>
</dbReference>
<dbReference type="Pfam" id="PF15025">
    <property type="entry name" value="C5orf34-like_N"/>
    <property type="match status" value="1"/>
</dbReference>
<dbReference type="Pfam" id="PF22833">
    <property type="entry name" value="C5orf34_2nd"/>
    <property type="match status" value="1"/>
</dbReference>
<dbReference type="Pfam" id="PF15016">
    <property type="entry name" value="C5orf34_C"/>
    <property type="match status" value="1"/>
</dbReference>
<dbReference type="Pfam" id="PF22834">
    <property type="entry name" value="Polo_box_4"/>
    <property type="match status" value="1"/>
</dbReference>
<evidence type="ECO:0000269" key="1">
    <source>
    </source>
</evidence>
<sequence length="638" mass="72884">MAAELRMILYEDDSVQVQYVDGSTLQLSPCGSEFLFEKSPPVSAHPLEQPERIRQRTHFVISTYREQLQRALDFRNSSATCPFLSETIIPSERKKHIFIDITEVRWPSLDTDGTMIYMESGIVKITSLDGHAYLCLPRSQHEFTVHFLCKVSQKSDSSAVLSETNNKAPKDKLVEKTGKICIRGNLPGQRLKNKENEFHCQIMKSKETLKKMSCVNGTEGREELPSPGTKHTCVYTWVKQCWSVAACPEEWKYPLSLALHFHNKISNMSKIDAHITQSRFLTSDISEERGKVVSVLPRALSLSCPVPHLHRWNFCDSLLQRQSDEYSYPELVKMVWYKGVTYRLTHQNMNSIEIYSGDGSVFKSEGAYFGNYFTYYSIQEGSGKREEKTYSVNNLPPDRPGSPFTVGSLIKQATRILQHCVKMRLSLSHNYRICCWKMVPGINDSNILPLVLKESLIPSVGRFLAYSDDKVHAIFLDGITLTLNWNFSSPIEKRQVNQGLNLGWCKLTFPDGQEQLIQIEHPEPYERYVTTVTSWCRRLTQTSPREMPTHSSSSVLQENWSVASELEKIQKFNLLLENSGILNQISNKKNEQQSFDHYKPGSSETLLGEVNENRVSIALKKTSEILHDIDCLLSNSKK</sequence>
<keyword id="KW-1267">Proteomics identification</keyword>
<keyword id="KW-1185">Reference proteome</keyword>
<gene>
    <name type="primary">C5orf34</name>
</gene>
<name>CE034_HUMAN</name>
<organism>
    <name type="scientific">Homo sapiens</name>
    <name type="common">Human</name>
    <dbReference type="NCBI Taxonomy" id="9606"/>
    <lineage>
        <taxon>Eukaryota</taxon>
        <taxon>Metazoa</taxon>
        <taxon>Chordata</taxon>
        <taxon>Craniata</taxon>
        <taxon>Vertebrata</taxon>
        <taxon>Euteleostomi</taxon>
        <taxon>Mammalia</taxon>
        <taxon>Eutheria</taxon>
        <taxon>Euarchontoglires</taxon>
        <taxon>Primates</taxon>
        <taxon>Haplorrhini</taxon>
        <taxon>Catarrhini</taxon>
        <taxon>Hominidae</taxon>
        <taxon>Homo</taxon>
    </lineage>
</organism>
<protein>
    <recommendedName>
        <fullName>Uncharacterized protein C5orf34</fullName>
    </recommendedName>
</protein>
<proteinExistence type="evidence at protein level"/>
<accession>Q96MH7</accession>
<reference key="1">
    <citation type="journal article" date="2004" name="Nat. Genet.">
        <title>Complete sequencing and characterization of 21,243 full-length human cDNAs.</title>
        <authorList>
            <person name="Ota T."/>
            <person name="Suzuki Y."/>
            <person name="Nishikawa T."/>
            <person name="Otsuki T."/>
            <person name="Sugiyama T."/>
            <person name="Irie R."/>
            <person name="Wakamatsu A."/>
            <person name="Hayashi K."/>
            <person name="Sato H."/>
            <person name="Nagai K."/>
            <person name="Kimura K."/>
            <person name="Makita H."/>
            <person name="Sekine M."/>
            <person name="Obayashi M."/>
            <person name="Nishi T."/>
            <person name="Shibahara T."/>
            <person name="Tanaka T."/>
            <person name="Ishii S."/>
            <person name="Yamamoto J."/>
            <person name="Saito K."/>
            <person name="Kawai Y."/>
            <person name="Isono Y."/>
            <person name="Nakamura Y."/>
            <person name="Nagahari K."/>
            <person name="Murakami K."/>
            <person name="Yasuda T."/>
            <person name="Iwayanagi T."/>
            <person name="Wagatsuma M."/>
            <person name="Shiratori A."/>
            <person name="Sudo H."/>
            <person name="Hosoiri T."/>
            <person name="Kaku Y."/>
            <person name="Kodaira H."/>
            <person name="Kondo H."/>
            <person name="Sugawara M."/>
            <person name="Takahashi M."/>
            <person name="Kanda K."/>
            <person name="Yokoi T."/>
            <person name="Furuya T."/>
            <person name="Kikkawa E."/>
            <person name="Omura Y."/>
            <person name="Abe K."/>
            <person name="Kamihara K."/>
            <person name="Katsuta N."/>
            <person name="Sato K."/>
            <person name="Tanikawa M."/>
            <person name="Yamazaki M."/>
            <person name="Ninomiya K."/>
            <person name="Ishibashi T."/>
            <person name="Yamashita H."/>
            <person name="Murakawa K."/>
            <person name="Fujimori K."/>
            <person name="Tanai H."/>
            <person name="Kimata M."/>
            <person name="Watanabe M."/>
            <person name="Hiraoka S."/>
            <person name="Chiba Y."/>
            <person name="Ishida S."/>
            <person name="Ono Y."/>
            <person name="Takiguchi S."/>
            <person name="Watanabe S."/>
            <person name="Yosida M."/>
            <person name="Hotuta T."/>
            <person name="Kusano J."/>
            <person name="Kanehori K."/>
            <person name="Takahashi-Fujii A."/>
            <person name="Hara H."/>
            <person name="Tanase T.-O."/>
            <person name="Nomura Y."/>
            <person name="Togiya S."/>
            <person name="Komai F."/>
            <person name="Hara R."/>
            <person name="Takeuchi K."/>
            <person name="Arita M."/>
            <person name="Imose N."/>
            <person name="Musashino K."/>
            <person name="Yuuki H."/>
            <person name="Oshima A."/>
            <person name="Sasaki N."/>
            <person name="Aotsuka S."/>
            <person name="Yoshikawa Y."/>
            <person name="Matsunawa H."/>
            <person name="Ichihara T."/>
            <person name="Shiohata N."/>
            <person name="Sano S."/>
            <person name="Moriya S."/>
            <person name="Momiyama H."/>
            <person name="Satoh N."/>
            <person name="Takami S."/>
            <person name="Terashima Y."/>
            <person name="Suzuki O."/>
            <person name="Nakagawa S."/>
            <person name="Senoh A."/>
            <person name="Mizoguchi H."/>
            <person name="Goto Y."/>
            <person name="Shimizu F."/>
            <person name="Wakebe H."/>
            <person name="Hishigaki H."/>
            <person name="Watanabe T."/>
            <person name="Sugiyama A."/>
            <person name="Takemoto M."/>
            <person name="Kawakami B."/>
            <person name="Yamazaki M."/>
            <person name="Watanabe K."/>
            <person name="Kumagai A."/>
            <person name="Itakura S."/>
            <person name="Fukuzumi Y."/>
            <person name="Fujimori Y."/>
            <person name="Komiyama M."/>
            <person name="Tashiro H."/>
            <person name="Tanigami A."/>
            <person name="Fujiwara T."/>
            <person name="Ono T."/>
            <person name="Yamada K."/>
            <person name="Fujii Y."/>
            <person name="Ozaki K."/>
            <person name="Hirao M."/>
            <person name="Ohmori Y."/>
            <person name="Kawabata A."/>
            <person name="Hikiji T."/>
            <person name="Kobatake N."/>
            <person name="Inagaki H."/>
            <person name="Ikema Y."/>
            <person name="Okamoto S."/>
            <person name="Okitani R."/>
            <person name="Kawakami T."/>
            <person name="Noguchi S."/>
            <person name="Itoh T."/>
            <person name="Shigeta K."/>
            <person name="Senba T."/>
            <person name="Matsumura K."/>
            <person name="Nakajima Y."/>
            <person name="Mizuno T."/>
            <person name="Morinaga M."/>
            <person name="Sasaki M."/>
            <person name="Togashi T."/>
            <person name="Oyama M."/>
            <person name="Hata H."/>
            <person name="Watanabe M."/>
            <person name="Komatsu T."/>
            <person name="Mizushima-Sugano J."/>
            <person name="Satoh T."/>
            <person name="Shirai Y."/>
            <person name="Takahashi Y."/>
            <person name="Nakagawa K."/>
            <person name="Okumura K."/>
            <person name="Nagase T."/>
            <person name="Nomura N."/>
            <person name="Kikuchi H."/>
            <person name="Masuho Y."/>
            <person name="Yamashita R."/>
            <person name="Nakai K."/>
            <person name="Yada T."/>
            <person name="Nakamura Y."/>
            <person name="Ohara O."/>
            <person name="Isogai T."/>
            <person name="Sugano S."/>
        </authorList>
    </citation>
    <scope>NUCLEOTIDE SEQUENCE [LARGE SCALE MRNA]</scope>
    <source>
        <tissue>Pulmonary artery</tissue>
    </source>
</reference>
<reference key="2">
    <citation type="journal article" date="2004" name="Nature">
        <title>The DNA sequence and comparative analysis of human chromosome 5.</title>
        <authorList>
            <person name="Schmutz J."/>
            <person name="Martin J."/>
            <person name="Terry A."/>
            <person name="Couronne O."/>
            <person name="Grimwood J."/>
            <person name="Lowry S."/>
            <person name="Gordon L.A."/>
            <person name="Scott D."/>
            <person name="Xie G."/>
            <person name="Huang W."/>
            <person name="Hellsten U."/>
            <person name="Tran-Gyamfi M."/>
            <person name="She X."/>
            <person name="Prabhakar S."/>
            <person name="Aerts A."/>
            <person name="Altherr M."/>
            <person name="Bajorek E."/>
            <person name="Black S."/>
            <person name="Branscomb E."/>
            <person name="Caoile C."/>
            <person name="Challacombe J.F."/>
            <person name="Chan Y.M."/>
            <person name="Denys M."/>
            <person name="Detter J.C."/>
            <person name="Escobar J."/>
            <person name="Flowers D."/>
            <person name="Fotopulos D."/>
            <person name="Glavina T."/>
            <person name="Gomez M."/>
            <person name="Gonzales E."/>
            <person name="Goodstein D."/>
            <person name="Grigoriev I."/>
            <person name="Groza M."/>
            <person name="Hammon N."/>
            <person name="Hawkins T."/>
            <person name="Haydu L."/>
            <person name="Israni S."/>
            <person name="Jett J."/>
            <person name="Kadner K."/>
            <person name="Kimball H."/>
            <person name="Kobayashi A."/>
            <person name="Lopez F."/>
            <person name="Lou Y."/>
            <person name="Martinez D."/>
            <person name="Medina C."/>
            <person name="Morgan J."/>
            <person name="Nandkeshwar R."/>
            <person name="Noonan J.P."/>
            <person name="Pitluck S."/>
            <person name="Pollard M."/>
            <person name="Predki P."/>
            <person name="Priest J."/>
            <person name="Ramirez L."/>
            <person name="Retterer J."/>
            <person name="Rodriguez A."/>
            <person name="Rogers S."/>
            <person name="Salamov A."/>
            <person name="Salazar A."/>
            <person name="Thayer N."/>
            <person name="Tice H."/>
            <person name="Tsai M."/>
            <person name="Ustaszewska A."/>
            <person name="Vo N."/>
            <person name="Wheeler J."/>
            <person name="Wu K."/>
            <person name="Yang J."/>
            <person name="Dickson M."/>
            <person name="Cheng J.-F."/>
            <person name="Eichler E.E."/>
            <person name="Olsen A."/>
            <person name="Pennacchio L.A."/>
            <person name="Rokhsar D.S."/>
            <person name="Richardson P."/>
            <person name="Lucas S.M."/>
            <person name="Myers R.M."/>
            <person name="Rubin E.M."/>
        </authorList>
    </citation>
    <scope>NUCLEOTIDE SEQUENCE [LARGE SCALE GENOMIC DNA]</scope>
</reference>
<reference key="3">
    <citation type="journal article" date="2004" name="Genome Res.">
        <title>The status, quality, and expansion of the NIH full-length cDNA project: the Mammalian Gene Collection (MGC).</title>
        <authorList>
            <consortium name="The MGC Project Team"/>
        </authorList>
    </citation>
    <scope>NUCLEOTIDE SEQUENCE [LARGE SCALE MRNA]</scope>
    <source>
        <tissue>Brain</tissue>
    </source>
</reference>
<reference key="4">
    <citation type="journal article" date="2006" name="Science">
        <title>The consensus coding sequences of human breast and colorectal cancers.</title>
        <authorList>
            <person name="Sjoeblom T."/>
            <person name="Jones S."/>
            <person name="Wood L.D."/>
            <person name="Parsons D.W."/>
            <person name="Lin J."/>
            <person name="Barber T.D."/>
            <person name="Mandelker D."/>
            <person name="Leary R.J."/>
            <person name="Ptak J."/>
            <person name="Silliman N."/>
            <person name="Szabo S."/>
            <person name="Buckhaults P."/>
            <person name="Farrell C."/>
            <person name="Meeh P."/>
            <person name="Markowitz S.D."/>
            <person name="Willis J."/>
            <person name="Dawson D."/>
            <person name="Willson J.K.V."/>
            <person name="Gazdar A.F."/>
            <person name="Hartigan J."/>
            <person name="Wu L."/>
            <person name="Liu C."/>
            <person name="Parmigiani G."/>
            <person name="Park B.H."/>
            <person name="Bachman K.E."/>
            <person name="Papadopoulos N."/>
            <person name="Vogelstein B."/>
            <person name="Kinzler K.W."/>
            <person name="Velculescu V.E."/>
        </authorList>
    </citation>
    <scope>VARIANT [LARGE SCALE ANALYSIS] ARG-266</scope>
</reference>
<feature type="chain" id="PRO_0000295897" description="Uncharacterized protein C5orf34">
    <location>
        <begin position="1"/>
        <end position="638"/>
    </location>
</feature>
<feature type="sequence variant" id="VAR_035618" description="In a breast cancer sample; somatic mutation." evidence="1">
    <original>S</original>
    <variation>R</variation>
    <location>
        <position position="266"/>
    </location>
</feature>